<proteinExistence type="evidence at transcript level"/>
<name>CCAR2_PONAB</name>
<reference key="1">
    <citation type="submission" date="2004-11" db="EMBL/GenBank/DDBJ databases">
        <authorList>
            <consortium name="The German cDNA consortium"/>
        </authorList>
    </citation>
    <scope>NUCLEOTIDE SEQUENCE [LARGE SCALE MRNA]</scope>
    <source>
        <tissue>Kidney</tissue>
    </source>
</reference>
<evidence type="ECO:0000250" key="1">
    <source>
        <dbReference type="UniProtKB" id="Q8N163"/>
    </source>
</evidence>
<evidence type="ECO:0000250" key="2">
    <source>
        <dbReference type="UniProtKB" id="Q8VDP4"/>
    </source>
</evidence>
<evidence type="ECO:0000255" key="3"/>
<evidence type="ECO:0000256" key="4">
    <source>
        <dbReference type="SAM" id="MobiDB-lite"/>
    </source>
</evidence>
<evidence type="ECO:0000305" key="5"/>
<protein>
    <recommendedName>
        <fullName>Cell cycle and apoptosis regulator protein 2</fullName>
    </recommendedName>
    <alternativeName>
        <fullName>Cell division cycle and apoptosis regulator protein 2</fullName>
    </alternativeName>
</protein>
<accession>Q5R8S0</accession>
<accession>Q5RE39</accession>
<sequence>MSQFKRQRINPLPGGRNFSGTASTSLLGPPPGLLTPPVATELSQNARHLQGGEKQRVFTGIVTSLHDYFGVVDEEVFFQLSVVKGRLPQLGEKVLVKAAYNPGQAVPWNAVKVQTLSNQPLLKSPAPPLLHVAALGQKQGILGAQPQLIFQPHRIPPLFPQKPLSLFQTSHTLHLSHLNRFPARGPHGRLDQGQSDDYDSKKRKQRAGGEPWGAKKPRHDLPPYRVHLTPYTVDSPICDFLELQRRYRSLLVPSDFLSVHLSWLSAFPLSQPFSLHHPSRIQVSSEKEAAPDAGAEPIPADSDPAYSSKVLLLSSPGLEELYRCCMLFVDDMAEPRETPEHPLKQIKFLLGRKEEEAVLVGGEWSPSLDGLDPQADPQVLVRTAIRCAQAQTGIDLSGCTKWWRFAEFQYLQPGPPRRLQTVVVYLPDVWTIMPTLEEWEALCQQKAAEAAPPTQEAPGETEPTEQAPDALEQAADTSRQNAETPEATTQQETDTDLPEAPPPPLEPAVIARPGCVNLSLHGIVEDRRPKERISFEVMVLAELFLEMLQRDFGYRVYKMLLSLPEKVVSPPEPEKEEAAKEEEAIKEEVVKEPKDEAQNEGPATESEAPLKEDGLLPKPPSSGGEEEEKPRGEASEDLCEMALDPELLLLRDDGEEEFAGAKLEDSEVRSVASNQSEMEFSSLQDMPKELDPSAVLPLDCLLAFVFFDANWCGYLHRRDLERILLTLGIRLSAEQAKQLVSRVVTQNICQYRSLQYSRQEGLDGGLPEEVLFGNLDLLPPSGKSTKPGAAPTEHKALVSHNGSLINVGSLLQRAEQQDSGRLYLENRIHTLELKLEESHNRFSATEVTNKTLAAEMQELRARLAEAEETARTAERQKSQLQRLLQELRRRLTPLQLEIQRVVEKADSWVEKEEPAPSN</sequence>
<keyword id="KW-0007">Acetylation</keyword>
<keyword id="KW-0010">Activator</keyword>
<keyword id="KW-0053">Apoptosis</keyword>
<keyword id="KW-0090">Biological rhythms</keyword>
<keyword id="KW-0131">Cell cycle</keyword>
<keyword id="KW-0175">Coiled coil</keyword>
<keyword id="KW-0963">Cytoplasm</keyword>
<keyword id="KW-0206">Cytoskeleton</keyword>
<keyword id="KW-0227">DNA damage</keyword>
<keyword id="KW-1017">Isopeptide bond</keyword>
<keyword id="KW-0481">Metalloenzyme inhibitor</keyword>
<keyword id="KW-0488">Methylation</keyword>
<keyword id="KW-0507">mRNA processing</keyword>
<keyword id="KW-0508">mRNA splicing</keyword>
<keyword id="KW-0539">Nucleus</keyword>
<keyword id="KW-0597">Phosphoprotein</keyword>
<keyword id="KW-1185">Reference proteome</keyword>
<keyword id="KW-0678">Repressor</keyword>
<keyword id="KW-0804">Transcription</keyword>
<keyword id="KW-0805">Transcription regulation</keyword>
<keyword id="KW-0043">Tumor suppressor</keyword>
<keyword id="KW-0832">Ubl conjugation</keyword>
<keyword id="KW-0879">Wnt signaling pathway</keyword>
<organism>
    <name type="scientific">Pongo abelii</name>
    <name type="common">Sumatran orangutan</name>
    <name type="synonym">Pongo pygmaeus abelii</name>
    <dbReference type="NCBI Taxonomy" id="9601"/>
    <lineage>
        <taxon>Eukaryota</taxon>
        <taxon>Metazoa</taxon>
        <taxon>Chordata</taxon>
        <taxon>Craniata</taxon>
        <taxon>Vertebrata</taxon>
        <taxon>Euteleostomi</taxon>
        <taxon>Mammalia</taxon>
        <taxon>Eutheria</taxon>
        <taxon>Euarchontoglires</taxon>
        <taxon>Primates</taxon>
        <taxon>Haplorrhini</taxon>
        <taxon>Catarrhini</taxon>
        <taxon>Hominidae</taxon>
        <taxon>Pongo</taxon>
    </lineage>
</organism>
<gene>
    <name type="primary">CCAR2</name>
</gene>
<comment type="function">
    <text evidence="1">Core component of the DBIRD complex, a multiprotein complex that acts at the interface between core mRNP particles and RNA polymerase II (RNAPII) and integrates transcript elongation with the regulation of alternative splicing: the DBIRD complex affects local transcript elongation rates and alternative splicing of a large set of exons embedded in (A + T)-rich DNA regions (By similarity). Inhibits SIRT1 deacetylase activity leading to increasing levels of p53/TP53 acetylation and p53-mediated apoptosis (By similarity). Inhibits SUV39H1 methyltransferase activity (By similarity). Mediates ligand-dependent transcriptional activation by nuclear hormone receptors (By similarity). Plays a critical role in maintaining genomic stability and cellular integrity following UV-induced genotoxic stress (By similarity). Regulates the circadian expression of the core clock components NR1D1 and BMAL1 (By similarity). Enhances the transcriptional repressor activity of NR1D1 through stabilization of NR1D1 protein levels by preventing its ubiquitination and subsequent degradation (By similarity). Represses the ligand-dependent transcriptional activation function of ESR2 (By similarity). Acts as a regulator of PCK1 expression and gluconeogenesis by a mechanism that involves, at least in part, both NR1D1 and SIRT1 (By similarity). Negatively regulates the deacetylase activity of HDAC3 and can alter its subcellular localization (By similarity). Positively regulates the beta-catenin pathway (canonical Wnt signaling pathway) and is required for MCC-mediated repression of the beta-catenin pathway (By similarity). Represses ligand-dependent transcriptional activation function of NR1H2 and NR1H3 and inhibits the interaction of SIRT1 with NR1H3 (By similarity). Plays an important role in tumor suppression through p53/TP53 regulation; stabilizes p53/TP53 by affecting its interaction with ubiquitin ligase MDM2 (By similarity). Represses the transcriptional activator activity of BRCA1 (By similarity). Inhibits SIRT1 in a CHEK2 and PSEM3-dependent manner and inhibits the activity of CHEK2 in vitro (By similarity).</text>
</comment>
<comment type="subunit">
    <text evidence="1 2">Component of the DBIRD complex (By similarity). Interacts with ZNF326/ZIRD; the interaction is direct (By similarity). Interacts (via N-terminus) with SIRT1, which inhibits the deacetylation of substrates (By similarity). Interacts (via N-terminus) with SUV39H1; this interaction abolishes the interaction with SIRT1 (By similarity). Component of a nuclear receptor-mediated transcription complex composed of at least ZNF335, CCAR2 and EMSY; the complex stimulates the transcription of nuclear receptor target genes such as SOX9 and HOXA1 (By similarity). Within the complex interacts with EMSY and interacts with ZNF335 (via C-terminus) (By similarity). Components of this complex may associate with components of a histone methylation complex to form a complex at least composed of ZNF335, HCFC1, CCAR2, EMSY, MKI67, RBBP5, ASH2L and WDR5 (By similarity). Within this complex, interacts with ASH2L (By similarity). Interacts with NR1D1 (By similarity). Interacts (via N-terminus) with ESR1 and ESR2 (By similarity). Interacts (via N-terminus) with HDAC3 (via C-terminus) (By similarity). Interacts with HDAC1 and MED2F (By similarity). Interacts with MCC (By similarity). Interacts (via N-terminus) with NR1H2 and NR1H3 in a ligand-independent manner (By similarity). Interacts with CSNK2A1 (By similarity). Interacts (via N-terminus) with p53/TP53 (By similarity). Interacts (via N-terminus) with BRCA1 (via the BRCT domains) (By similarity). Interacts (via N-terminus) with CHEK2 (via protein kinase domain) (By similarity). Interacts with PSEM3 (By similarity). Interacts (via N-terminus) with PSIA3 and SENP1 (By similarity). The sumoylated form shows a preferential interaction with SIRT1 as compared to its unmodified form (By similarity). Interacts with CECR2; may form part of the CERF-1 and/or CEF-5 ISWI chromatin remodeling complexes in embryonic stem cells (By similarity).</text>
</comment>
<comment type="subcellular location">
    <subcellularLocation>
        <location evidence="1">Nucleus</location>
    </subcellularLocation>
    <subcellularLocation>
        <location evidence="1">Cytoplasm</location>
    </subcellularLocation>
    <subcellularLocation>
        <location evidence="1">Cytoplasm</location>
        <location evidence="1">Cytoskeleton</location>
        <location evidence="1">Spindle</location>
    </subcellularLocation>
    <text evidence="1">Recruited to chromatin, post-UV irradiation. Sequestered to the cytoplasm in the presence of MCC. Translocated to the cytoplasm during UV-induced apoptosis.</text>
</comment>
<comment type="PTM">
    <text evidence="1">ATM/ATR-mediated phosphorylation at Thr-454 upon DNA damage promotes binding to SIRT1. Phosphorylation at Thr-454 promotes its sumoylation by switching the binding partner of CCAR2 from SENP1 to PIAS3.</text>
</comment>
<comment type="PTM">
    <text evidence="1">Acetylation at Lys-112 and Lys-215 by KAT8 prevents inhibitory binding to SIRT1 and increases its deacetylase activity.</text>
</comment>
<comment type="PTM">
    <text evidence="1">Genotoxic stress induces its sumoylation and sumoylation promotes the SIRT1-CCAR2 interaction which in turn inhibits SIRT1-mediated deacetylation of p53/TP53. Sumoylation leads to transcriptional activation of p53/TP53 by sequestering SIRT1 from p53/TP53. Desumoylated by SENP1.</text>
</comment>
<feature type="chain" id="PRO_0000050815" description="Cell cycle and apoptosis regulator protein 2">
    <location>
        <begin position="1"/>
        <end position="918"/>
    </location>
</feature>
<feature type="region of interest" description="Disordered" evidence="4">
    <location>
        <begin position="1"/>
        <end position="35"/>
    </location>
</feature>
<feature type="region of interest" description="Disordered" evidence="4">
    <location>
        <begin position="179"/>
        <end position="219"/>
    </location>
</feature>
<feature type="region of interest" description="Disordered" evidence="4">
    <location>
        <begin position="446"/>
        <end position="510"/>
    </location>
</feature>
<feature type="region of interest" description="Disordered" evidence="4">
    <location>
        <begin position="568"/>
        <end position="637"/>
    </location>
</feature>
<feature type="region of interest" description="Interaction with MCC" evidence="1">
    <location>
        <begin position="605"/>
        <end position="665"/>
    </location>
</feature>
<feature type="region of interest" description="Interaction with NR1D1" evidence="1">
    <location>
        <begin position="699"/>
        <end position="918"/>
    </location>
</feature>
<feature type="coiled-coil region" evidence="3">
    <location>
        <begin position="824"/>
        <end position="904"/>
    </location>
</feature>
<feature type="compositionally biased region" description="Low complexity" evidence="4">
    <location>
        <begin position="447"/>
        <end position="468"/>
    </location>
</feature>
<feature type="compositionally biased region" description="Low complexity" evidence="4">
    <location>
        <begin position="482"/>
        <end position="492"/>
    </location>
</feature>
<feature type="compositionally biased region" description="Basic and acidic residues" evidence="4">
    <location>
        <begin position="572"/>
        <end position="597"/>
    </location>
</feature>
<feature type="modified residue" description="Phosphothreonine" evidence="1">
    <location>
        <position position="35"/>
    </location>
</feature>
<feature type="modified residue" description="N6-acetyllysine; by KAT8" evidence="1">
    <location>
        <position position="112"/>
    </location>
</feature>
<feature type="modified residue" description="N6-methyllysine" evidence="1">
    <location>
        <position position="123"/>
    </location>
</feature>
<feature type="modified residue" description="Phosphoserine" evidence="1">
    <location>
        <position position="124"/>
    </location>
</feature>
<feature type="modified residue" description="Omega-N-methylarginine" evidence="1">
    <location>
        <position position="180"/>
    </location>
</feature>
<feature type="modified residue" description="N6-acetyllysine; by KAT8" evidence="1">
    <location>
        <position position="215"/>
    </location>
</feature>
<feature type="modified residue" description="Phosphothreonine; by ATM, ATR and CK2" evidence="1">
    <location>
        <position position="454"/>
    </location>
</feature>
<feature type="modified residue" description="Phosphothreonine" evidence="1">
    <location>
        <position position="484"/>
    </location>
</feature>
<feature type="modified residue" description="Phosphoserine" evidence="1">
    <location>
        <position position="569"/>
    </location>
</feature>
<feature type="modified residue" description="Phosphoserine" evidence="1">
    <location>
        <position position="622"/>
    </location>
</feature>
<feature type="modified residue" description="Phosphoserine" evidence="1">
    <location>
        <position position="670"/>
    </location>
</feature>
<feature type="modified residue" description="Phosphoserine" evidence="1">
    <location>
        <position position="673"/>
    </location>
</feature>
<feature type="modified residue" description="Phosphoserine" evidence="1">
    <location>
        <position position="676"/>
    </location>
</feature>
<feature type="modified residue" description="Phosphoserine" evidence="1">
    <location>
        <position position="682"/>
    </location>
</feature>
<feature type="modified residue" description="Phosphoserine" evidence="1">
    <location>
        <position position="803"/>
    </location>
</feature>
<feature type="modified residue" description="Phosphothreonine" evidence="1">
    <location>
        <position position="892"/>
    </location>
</feature>
<feature type="cross-link" description="Glycyl lysine isopeptide (Lys-Gly) (interchain with G-Cter in SUMO2 and SUMO3); alternate" evidence="1">
    <location>
        <position position="586"/>
    </location>
</feature>
<feature type="cross-link" description="Glycyl lysine isopeptide (Lys-Gly) (interchain with G-Cter in SUMO2); alternate" evidence="1">
    <location>
        <position position="586"/>
    </location>
</feature>
<feature type="sequence conflict" description="In Ref. 1; CAH89968." evidence="5" ref="1">
    <original>Y</original>
    <variation>C</variation>
    <location>
        <position position="68"/>
    </location>
</feature>
<feature type="sequence conflict" description="In Ref. 1; CAH89968." evidence="5" ref="1">
    <original>Q</original>
    <variation>R</variation>
    <location>
        <position position="151"/>
    </location>
</feature>
<dbReference type="EMBL" id="CR859680">
    <property type="protein sequence ID" value="CAH91840.1"/>
    <property type="molecule type" value="mRNA"/>
</dbReference>
<dbReference type="EMBL" id="CR857699">
    <property type="protein sequence ID" value="CAH89968.1"/>
    <property type="molecule type" value="mRNA"/>
</dbReference>
<dbReference type="SMR" id="Q5R8S0"/>
<dbReference type="FunCoup" id="Q5R8S0">
    <property type="interactions" value="3812"/>
</dbReference>
<dbReference type="STRING" id="9601.ENSPPYP00000020648"/>
<dbReference type="eggNOG" id="KOG4246">
    <property type="taxonomic scope" value="Eukaryota"/>
</dbReference>
<dbReference type="InParanoid" id="Q5R8S0"/>
<dbReference type="Proteomes" id="UP000001595">
    <property type="component" value="Unplaced"/>
</dbReference>
<dbReference type="GO" id="GO:0000785">
    <property type="term" value="C:chromatin"/>
    <property type="evidence" value="ECO:0000250"/>
    <property type="project" value="UniProtKB"/>
</dbReference>
<dbReference type="GO" id="GO:0005737">
    <property type="term" value="C:cytoplasm"/>
    <property type="evidence" value="ECO:0000250"/>
    <property type="project" value="UniProtKB"/>
</dbReference>
<dbReference type="GO" id="GO:0044609">
    <property type="term" value="C:DBIRD complex"/>
    <property type="evidence" value="ECO:0000250"/>
    <property type="project" value="UniProtKB"/>
</dbReference>
<dbReference type="GO" id="GO:0005634">
    <property type="term" value="C:nucleus"/>
    <property type="evidence" value="ECO:0000250"/>
    <property type="project" value="UniProtKB"/>
</dbReference>
<dbReference type="GO" id="GO:0005819">
    <property type="term" value="C:spindle"/>
    <property type="evidence" value="ECO:0000250"/>
    <property type="project" value="UniProtKB"/>
</dbReference>
<dbReference type="GO" id="GO:0004857">
    <property type="term" value="F:enzyme inhibitor activity"/>
    <property type="evidence" value="ECO:0000250"/>
    <property type="project" value="UniProtKB"/>
</dbReference>
<dbReference type="GO" id="GO:0000993">
    <property type="term" value="F:RNA polymerase II complex binding"/>
    <property type="evidence" value="ECO:0000250"/>
    <property type="project" value="UniProtKB"/>
</dbReference>
<dbReference type="GO" id="GO:0006915">
    <property type="term" value="P:apoptotic process"/>
    <property type="evidence" value="ECO:0007669"/>
    <property type="project" value="UniProtKB-KW"/>
</dbReference>
<dbReference type="GO" id="GO:0006974">
    <property type="term" value="P:DNA damage response"/>
    <property type="evidence" value="ECO:0007669"/>
    <property type="project" value="UniProtKB-KW"/>
</dbReference>
<dbReference type="GO" id="GO:0006397">
    <property type="term" value="P:mRNA processing"/>
    <property type="evidence" value="ECO:0007669"/>
    <property type="project" value="UniProtKB-KW"/>
</dbReference>
<dbReference type="GO" id="GO:0030308">
    <property type="term" value="P:negative regulation of cell growth"/>
    <property type="evidence" value="ECO:0000250"/>
    <property type="project" value="UniProtKB"/>
</dbReference>
<dbReference type="GO" id="GO:0045892">
    <property type="term" value="P:negative regulation of DNA-templated transcription"/>
    <property type="evidence" value="ECO:0000250"/>
    <property type="project" value="UniProtKB"/>
</dbReference>
<dbReference type="GO" id="GO:1902230">
    <property type="term" value="P:negative regulation of intrinsic apoptotic signaling pathway in response to DNA damage"/>
    <property type="evidence" value="ECO:0000250"/>
    <property type="project" value="UniProtKB"/>
</dbReference>
<dbReference type="GO" id="GO:0032435">
    <property type="term" value="P:negative regulation of proteasomal ubiquitin-dependent protein catabolic process"/>
    <property type="evidence" value="ECO:0000250"/>
    <property type="project" value="UniProtKB"/>
</dbReference>
<dbReference type="GO" id="GO:0043065">
    <property type="term" value="P:positive regulation of apoptotic process"/>
    <property type="evidence" value="ECO:0000250"/>
    <property type="project" value="UniProtKB"/>
</dbReference>
<dbReference type="GO" id="GO:0090263">
    <property type="term" value="P:positive regulation of canonical Wnt signaling pathway"/>
    <property type="evidence" value="ECO:0000250"/>
    <property type="project" value="UniProtKB"/>
</dbReference>
<dbReference type="GO" id="GO:2000003">
    <property type="term" value="P:positive regulation of DNA damage checkpoint"/>
    <property type="evidence" value="ECO:0000250"/>
    <property type="project" value="UniProtKB"/>
</dbReference>
<dbReference type="GO" id="GO:0042752">
    <property type="term" value="P:regulation of circadian rhythm"/>
    <property type="evidence" value="ECO:0000250"/>
    <property type="project" value="UniProtKB"/>
</dbReference>
<dbReference type="GO" id="GO:0032784">
    <property type="term" value="P:regulation of DNA-templated transcription elongation"/>
    <property type="evidence" value="ECO:0000250"/>
    <property type="project" value="UniProtKB"/>
</dbReference>
<dbReference type="GO" id="GO:0031647">
    <property type="term" value="P:regulation of protein stability"/>
    <property type="evidence" value="ECO:0000250"/>
    <property type="project" value="UniProtKB"/>
</dbReference>
<dbReference type="GO" id="GO:0009411">
    <property type="term" value="P:response to UV"/>
    <property type="evidence" value="ECO:0000250"/>
    <property type="project" value="UniProtKB"/>
</dbReference>
<dbReference type="GO" id="GO:0048511">
    <property type="term" value="P:rhythmic process"/>
    <property type="evidence" value="ECO:0007669"/>
    <property type="project" value="UniProtKB-KW"/>
</dbReference>
<dbReference type="GO" id="GO:0008380">
    <property type="term" value="P:RNA splicing"/>
    <property type="evidence" value="ECO:0000250"/>
    <property type="project" value="UniProtKB"/>
</dbReference>
<dbReference type="GO" id="GO:0016055">
    <property type="term" value="P:Wnt signaling pathway"/>
    <property type="evidence" value="ECO:0007669"/>
    <property type="project" value="UniProtKB-KW"/>
</dbReference>
<dbReference type="InterPro" id="IPR045354">
    <property type="entry name" value="BURAN"/>
</dbReference>
<dbReference type="InterPro" id="IPR025224">
    <property type="entry name" value="CCAR1/CCAR2"/>
</dbReference>
<dbReference type="InterPro" id="IPR025954">
    <property type="entry name" value="DBC1/CARP1_inactive_NUDIX_dom"/>
</dbReference>
<dbReference type="InterPro" id="IPR011992">
    <property type="entry name" value="EF-hand-dom_pair"/>
</dbReference>
<dbReference type="InterPro" id="IPR045353">
    <property type="entry name" value="LAIKA"/>
</dbReference>
<dbReference type="InterPro" id="IPR025223">
    <property type="entry name" value="S1-like_RNA-bd_dom"/>
</dbReference>
<dbReference type="PANTHER" id="PTHR14304:SF12">
    <property type="entry name" value="CELL CYCLE AND APOPTOSIS REGULATOR PROTEIN 2"/>
    <property type="match status" value="1"/>
</dbReference>
<dbReference type="PANTHER" id="PTHR14304">
    <property type="entry name" value="CELL DIVISION CYCLE AND APOPTOSIS REGULATOR PROTEIN"/>
    <property type="match status" value="1"/>
</dbReference>
<dbReference type="Pfam" id="PF19257">
    <property type="entry name" value="BURAN"/>
    <property type="match status" value="1"/>
</dbReference>
<dbReference type="Pfam" id="PF14443">
    <property type="entry name" value="DBC1"/>
    <property type="match status" value="1"/>
</dbReference>
<dbReference type="Pfam" id="PF19256">
    <property type="entry name" value="LAIKA"/>
    <property type="match status" value="1"/>
</dbReference>
<dbReference type="Pfam" id="PF14444">
    <property type="entry name" value="S1-like"/>
    <property type="match status" value="1"/>
</dbReference>
<dbReference type="SMART" id="SM01122">
    <property type="entry name" value="DBC1"/>
    <property type="match status" value="1"/>
</dbReference>
<dbReference type="SUPFAM" id="SSF47473">
    <property type="entry name" value="EF-hand"/>
    <property type="match status" value="1"/>
</dbReference>
<dbReference type="SUPFAM" id="SSF90257">
    <property type="entry name" value="Myosin rod fragments"/>
    <property type="match status" value="1"/>
</dbReference>